<reference key="1">
    <citation type="journal article" date="2007" name="Plant Cell">
        <title>Dothideomycete-plant interactions illuminated by genome sequencing and EST analysis of the wheat pathogen Stagonospora nodorum.</title>
        <authorList>
            <person name="Hane J.K."/>
            <person name="Lowe R.G.T."/>
            <person name="Solomon P.S."/>
            <person name="Tan K.-C."/>
            <person name="Schoch C.L."/>
            <person name="Spatafora J.W."/>
            <person name="Crous P.W."/>
            <person name="Kodira C.D."/>
            <person name="Birren B.W."/>
            <person name="Galagan J.E."/>
            <person name="Torriani S.F.F."/>
            <person name="McDonald B.A."/>
            <person name="Oliver R.P."/>
        </authorList>
    </citation>
    <scope>NUCLEOTIDE SEQUENCE [LARGE SCALE GENOMIC DNA]</scope>
    <source>
        <strain>SN15 / ATCC MYA-4574 / FGSC 10173</strain>
    </source>
</reference>
<organism>
    <name type="scientific">Phaeosphaeria nodorum (strain SN15 / ATCC MYA-4574 / FGSC 10173)</name>
    <name type="common">Glume blotch fungus</name>
    <name type="synonym">Parastagonospora nodorum</name>
    <dbReference type="NCBI Taxonomy" id="321614"/>
    <lineage>
        <taxon>Eukaryota</taxon>
        <taxon>Fungi</taxon>
        <taxon>Dikarya</taxon>
        <taxon>Ascomycota</taxon>
        <taxon>Pezizomycotina</taxon>
        <taxon>Dothideomycetes</taxon>
        <taxon>Pleosporomycetidae</taxon>
        <taxon>Pleosporales</taxon>
        <taxon>Pleosporineae</taxon>
        <taxon>Phaeosphaeriaceae</taxon>
        <taxon>Parastagonospora</taxon>
    </lineage>
</organism>
<sequence>MAYNFVRSYIDTFRERTAAISHTSTFRETGQITPEEFVLAGDFLVFKFPSWQWGDASSAGKRVPYLPEGKQYLMTRGVPCHRRLDDNFAGEAGQDETIVGDGFAGSEGADDDGWLRTGGMAASQEAKVRDVRTVDESGNLGAAEEEDEIPDMEDMDDDEEAIIRDPQGGSSSTAPLRTYTLYICYSAHYRTPRLYLSGYGATSVPLKPQEMMEDIVGDYKDKTVTIEDFPFFEHALKTASVHPCKHASVMKVLLDRADAALKLRLAKLKAGKDIGKLDTGMEGLVDDTRLLKLSEQAKGKEGDEAKDDWEVLSEGGDDEVAIRVDQYLVVFLKFMASVTPGIEHDFTMGV</sequence>
<gene>
    <name type="primary">ATG3</name>
    <name type="ORF">SNOG_13776</name>
</gene>
<comment type="function">
    <text evidence="1">E2 conjugating enzyme required for the cytoplasm to vacuole transport (Cvt) and autophagy. Required for selective autophagic degradation of the nucleus (nucleophagy) as well as for mitophagy which contributes to regulate mitochondrial quantity and quality by eliminating the mitochondria to a basal level to fulfill cellular energy requirements and preventing excess ROS production. Responsible for the E2-like covalent binding of phosphatidylethanolamine to the C-terminal Gly of ATG8. The ATG12-ATG5 conjugate plays a role of an E3 and promotes the transfer of ATG8 from ATG3 to phosphatidylethanolamine (PE). This step is required for the membrane association of ATG8. The formation of the ATG8-phosphatidylethanolamine conjugate is essential for autophagy and for the cytoplasm to vacuole transport (Cvt). The ATG8-PE conjugate mediates tethering between adjacent membranes and stimulates membrane hemifusion, leading to expansion of the autophagosomal membrane during autophagy (By similarity).</text>
</comment>
<comment type="subunit">
    <text evidence="1">Monomer. Interacts with ATG8 through an intermediate thioester bond through the C-terminal Gly of ATG8. Also interacts with the 40 amino acid C-terminal region of the E1-like ATG7 enzyme. Also interacts with the ATG12-ATG5 conjugate.</text>
</comment>
<comment type="subcellular location">
    <subcellularLocation>
        <location evidence="1">Cytoplasm</location>
    </subcellularLocation>
</comment>
<comment type="domain">
    <text evidence="1">The N-terminal region is involved in phosphatidylethanolamine-binding and is required for ATG8-PE conjugation.</text>
</comment>
<comment type="domain">
    <text evidence="1">The flexible region (FR) is required for ATG7-binding.</text>
</comment>
<comment type="domain">
    <text evidence="1">The handle region (HR) contains the ATG8 interaction motif (AIM) and mediates binding to ATG8. It is crucial for the cytoplasm-to-vacuole targeting pathway (By similarity).</text>
</comment>
<comment type="similarity">
    <text evidence="3">Belongs to the ATG3 family.</text>
</comment>
<feature type="chain" id="PRO_0000317825" description="Autophagy-related protein 3">
    <location>
        <begin position="1"/>
        <end position="350"/>
    </location>
</feature>
<feature type="region of interest" description="Flexible region" evidence="1">
    <location>
        <begin position="87"/>
        <end position="165"/>
    </location>
</feature>
<feature type="region of interest" description="Disordered" evidence="2">
    <location>
        <begin position="126"/>
        <end position="153"/>
    </location>
</feature>
<feature type="region of interest" description="Handle region" evidence="1">
    <location>
        <begin position="248"/>
        <end position="326"/>
    </location>
</feature>
<feature type="compositionally biased region" description="Basic and acidic residues" evidence="2">
    <location>
        <begin position="126"/>
        <end position="135"/>
    </location>
</feature>
<feature type="compositionally biased region" description="Acidic residues" evidence="2">
    <location>
        <begin position="143"/>
        <end position="153"/>
    </location>
</feature>
<feature type="active site" description="Glycyl thioester intermediate" evidence="1">
    <location>
        <position position="244"/>
    </location>
</feature>
<proteinExistence type="inferred from homology"/>
<dbReference type="EMBL" id="CH445352">
    <property type="protein sequence ID" value="EAT78800.1"/>
    <property type="molecule type" value="Genomic_DNA"/>
</dbReference>
<dbReference type="RefSeq" id="XP_001803981.1">
    <property type="nucleotide sequence ID" value="XM_001803929.1"/>
</dbReference>
<dbReference type="SMR" id="Q0U388"/>
<dbReference type="FunCoup" id="Q0U388">
    <property type="interactions" value="1019"/>
</dbReference>
<dbReference type="STRING" id="321614.Q0U388"/>
<dbReference type="EnsemblFungi" id="SNOT_13776">
    <property type="protein sequence ID" value="SNOT_13776"/>
    <property type="gene ID" value="SNOG_13776"/>
</dbReference>
<dbReference type="GeneID" id="5980903"/>
<dbReference type="KEGG" id="pno:SNOG_13776"/>
<dbReference type="VEuPathDB" id="FungiDB:JI435_137760"/>
<dbReference type="eggNOG" id="KOG2981">
    <property type="taxonomic scope" value="Eukaryota"/>
</dbReference>
<dbReference type="HOGENOM" id="CLU_027518_2_0_1"/>
<dbReference type="InParanoid" id="Q0U388"/>
<dbReference type="OMA" id="HCPTWSW"/>
<dbReference type="OrthoDB" id="1584384at2759"/>
<dbReference type="Proteomes" id="UP000001055">
    <property type="component" value="Unassembled WGS sequence"/>
</dbReference>
<dbReference type="GO" id="GO:0005829">
    <property type="term" value="C:cytosol"/>
    <property type="evidence" value="ECO:0000318"/>
    <property type="project" value="GO_Central"/>
</dbReference>
<dbReference type="GO" id="GO:0005739">
    <property type="term" value="C:mitochondrion"/>
    <property type="evidence" value="ECO:0007669"/>
    <property type="project" value="EnsemblFungi"/>
</dbReference>
<dbReference type="GO" id="GO:0061908">
    <property type="term" value="C:phagophore"/>
    <property type="evidence" value="ECO:0007669"/>
    <property type="project" value="EnsemblFungi"/>
</dbReference>
<dbReference type="GO" id="GO:0000407">
    <property type="term" value="C:phagophore assembly site"/>
    <property type="evidence" value="ECO:0000318"/>
    <property type="project" value="GO_Central"/>
</dbReference>
<dbReference type="GO" id="GO:0141046">
    <property type="term" value="F:Atg8-family conjugating enzyme activity"/>
    <property type="evidence" value="ECO:0000318"/>
    <property type="project" value="GO_Central"/>
</dbReference>
<dbReference type="GO" id="GO:0019776">
    <property type="term" value="F:Atg8-family ligase activity"/>
    <property type="evidence" value="ECO:0007669"/>
    <property type="project" value="EnsemblFungi"/>
</dbReference>
<dbReference type="GO" id="GO:0000045">
    <property type="term" value="P:autophagosome assembly"/>
    <property type="evidence" value="ECO:0000318"/>
    <property type="project" value="GO_Central"/>
</dbReference>
<dbReference type="GO" id="GO:0000422">
    <property type="term" value="P:autophagy of mitochondrion"/>
    <property type="evidence" value="ECO:0000318"/>
    <property type="project" value="GO_Central"/>
</dbReference>
<dbReference type="GO" id="GO:0061723">
    <property type="term" value="P:glycophagy"/>
    <property type="evidence" value="ECO:0000318"/>
    <property type="project" value="GO_Central"/>
</dbReference>
<dbReference type="GO" id="GO:0044804">
    <property type="term" value="P:nucleophagy"/>
    <property type="evidence" value="ECO:0000318"/>
    <property type="project" value="GO_Central"/>
</dbReference>
<dbReference type="GO" id="GO:0034727">
    <property type="term" value="P:piecemeal microautophagy of the nucleus"/>
    <property type="evidence" value="ECO:0007669"/>
    <property type="project" value="EnsemblFungi"/>
</dbReference>
<dbReference type="GO" id="GO:0006612">
    <property type="term" value="P:protein targeting to membrane"/>
    <property type="evidence" value="ECO:0007669"/>
    <property type="project" value="EnsemblFungi"/>
</dbReference>
<dbReference type="GO" id="GO:0015031">
    <property type="term" value="P:protein transport"/>
    <property type="evidence" value="ECO:0007669"/>
    <property type="project" value="UniProtKB-KW"/>
</dbReference>
<dbReference type="InterPro" id="IPR007135">
    <property type="entry name" value="Atg3/Atg10"/>
</dbReference>
<dbReference type="PANTHER" id="PTHR12866">
    <property type="entry name" value="UBIQUITIN-LIKE-CONJUGATING ENZYME ATG3"/>
    <property type="match status" value="1"/>
</dbReference>
<dbReference type="PANTHER" id="PTHR12866:SF2">
    <property type="entry name" value="UBIQUITIN-LIKE-CONJUGATING ENZYME ATG3"/>
    <property type="match status" value="1"/>
</dbReference>
<dbReference type="Pfam" id="PF03987">
    <property type="entry name" value="Autophagy_act_C"/>
    <property type="match status" value="1"/>
</dbReference>
<name>ATG3_PHANO</name>
<keyword id="KW-0072">Autophagy</keyword>
<keyword id="KW-0963">Cytoplasm</keyword>
<keyword id="KW-0653">Protein transport</keyword>
<keyword id="KW-0813">Transport</keyword>
<keyword id="KW-0833">Ubl conjugation pathway</keyword>
<evidence type="ECO:0000250" key="1"/>
<evidence type="ECO:0000256" key="2">
    <source>
        <dbReference type="SAM" id="MobiDB-lite"/>
    </source>
</evidence>
<evidence type="ECO:0000305" key="3"/>
<accession>Q0U388</accession>
<protein>
    <recommendedName>
        <fullName>Autophagy-related protein 3</fullName>
    </recommendedName>
    <alternativeName>
        <fullName>Autophagy-related E2-like conjugation enzyme ATG3</fullName>
    </alternativeName>
</protein>